<keyword id="KW-0028">Amino-acid biosynthesis</keyword>
<keyword id="KW-0055">Arginine biosynthesis</keyword>
<keyword id="KW-0067">ATP-binding</keyword>
<keyword id="KW-0963">Cytoplasm</keyword>
<keyword id="KW-0418">Kinase</keyword>
<keyword id="KW-0547">Nucleotide-binding</keyword>
<keyword id="KW-0808">Transferase</keyword>
<evidence type="ECO:0000255" key="1">
    <source>
        <dbReference type="HAMAP-Rule" id="MF_00082"/>
    </source>
</evidence>
<organism>
    <name type="scientific">Listeria monocytogenes serotype 4a (strain HCC23)</name>
    <dbReference type="NCBI Taxonomy" id="552536"/>
    <lineage>
        <taxon>Bacteria</taxon>
        <taxon>Bacillati</taxon>
        <taxon>Bacillota</taxon>
        <taxon>Bacilli</taxon>
        <taxon>Bacillales</taxon>
        <taxon>Listeriaceae</taxon>
        <taxon>Listeria</taxon>
    </lineage>
</organism>
<comment type="function">
    <text evidence="1">Catalyzes the ATP-dependent phosphorylation of N-acetyl-L-glutamate.</text>
</comment>
<comment type="catalytic activity">
    <reaction evidence="1">
        <text>N-acetyl-L-glutamate + ATP = N-acetyl-L-glutamyl 5-phosphate + ADP</text>
        <dbReference type="Rhea" id="RHEA:14629"/>
        <dbReference type="ChEBI" id="CHEBI:30616"/>
        <dbReference type="ChEBI" id="CHEBI:44337"/>
        <dbReference type="ChEBI" id="CHEBI:57936"/>
        <dbReference type="ChEBI" id="CHEBI:456216"/>
        <dbReference type="EC" id="2.7.2.8"/>
    </reaction>
</comment>
<comment type="pathway">
    <text evidence="1">Amino-acid biosynthesis; L-arginine biosynthesis; N(2)-acetyl-L-ornithine from L-glutamate: step 2/4.</text>
</comment>
<comment type="subcellular location">
    <subcellularLocation>
        <location evidence="1">Cytoplasm</location>
    </subcellularLocation>
</comment>
<comment type="similarity">
    <text evidence="1">Belongs to the acetylglutamate kinase family. ArgB subfamily.</text>
</comment>
<protein>
    <recommendedName>
        <fullName evidence="1">Acetylglutamate kinase</fullName>
        <ecNumber evidence="1">2.7.2.8</ecNumber>
    </recommendedName>
    <alternativeName>
        <fullName evidence="1">N-acetyl-L-glutamate 5-phosphotransferase</fullName>
    </alternativeName>
    <alternativeName>
        <fullName evidence="1">NAG kinase</fullName>
        <shortName evidence="1">NAGK</shortName>
    </alternativeName>
</protein>
<name>ARGB_LISMH</name>
<feature type="chain" id="PRO_1000118353" description="Acetylglutamate kinase">
    <location>
        <begin position="1"/>
        <end position="250"/>
    </location>
</feature>
<feature type="binding site" evidence="1">
    <location>
        <begin position="41"/>
        <end position="42"/>
    </location>
    <ligand>
        <name>substrate</name>
    </ligand>
</feature>
<feature type="binding site" evidence="1">
    <location>
        <position position="63"/>
    </location>
    <ligand>
        <name>substrate</name>
    </ligand>
</feature>
<feature type="binding site" evidence="1">
    <location>
        <position position="156"/>
    </location>
    <ligand>
        <name>substrate</name>
    </ligand>
</feature>
<feature type="site" description="Transition state stabilizer" evidence="1">
    <location>
        <position position="8"/>
    </location>
</feature>
<feature type="site" description="Transition state stabilizer" evidence="1">
    <location>
        <position position="215"/>
    </location>
</feature>
<sequence>MENTIVIKLGGVASDNLTEGFFRQITEWQAANKKIVLVHGGGHYITKMMEALAIPVETKNGLRITNKAALEVTKMVLIGQVQPAITTAFQKRNISVIGLNAGDTGLLEADRLSDTDLGLVGKITKVKTNLIEQLLSENIITVIAPLGINSEHDWLNVNADTAACEVASALHAEALYLLTDVPGVKNGSEIINEIATAEIEKLQKTGVIKGGMIPKLASAAFAAENGVDQVIITNSLETIGTKIKSKVAIG</sequence>
<reference key="1">
    <citation type="journal article" date="2011" name="J. Bacteriol.">
        <title>Genome sequence of lineage III Listeria monocytogenes strain HCC23.</title>
        <authorList>
            <person name="Steele C.L."/>
            <person name="Donaldson J.R."/>
            <person name="Paul D."/>
            <person name="Banes M.M."/>
            <person name="Arick T."/>
            <person name="Bridges S.M."/>
            <person name="Lawrence M.L."/>
        </authorList>
    </citation>
    <scope>NUCLEOTIDE SEQUENCE [LARGE SCALE GENOMIC DNA]</scope>
    <source>
        <strain>HCC23</strain>
    </source>
</reference>
<accession>B8DHF2</accession>
<dbReference type="EC" id="2.7.2.8" evidence="1"/>
<dbReference type="EMBL" id="CP001175">
    <property type="protein sequence ID" value="ACK39321.1"/>
    <property type="molecule type" value="Genomic_DNA"/>
</dbReference>
<dbReference type="RefSeq" id="WP_012581245.1">
    <property type="nucleotide sequence ID" value="NC_011660.1"/>
</dbReference>
<dbReference type="SMR" id="B8DHF2"/>
<dbReference type="KEGG" id="lmh:LMHCC_0973"/>
<dbReference type="HOGENOM" id="CLU_053680_1_0_9"/>
<dbReference type="UniPathway" id="UPA00068">
    <property type="reaction ID" value="UER00107"/>
</dbReference>
<dbReference type="GO" id="GO:0005737">
    <property type="term" value="C:cytoplasm"/>
    <property type="evidence" value="ECO:0007669"/>
    <property type="project" value="UniProtKB-SubCell"/>
</dbReference>
<dbReference type="GO" id="GO:0003991">
    <property type="term" value="F:acetylglutamate kinase activity"/>
    <property type="evidence" value="ECO:0007669"/>
    <property type="project" value="UniProtKB-UniRule"/>
</dbReference>
<dbReference type="GO" id="GO:0005524">
    <property type="term" value="F:ATP binding"/>
    <property type="evidence" value="ECO:0007669"/>
    <property type="project" value="UniProtKB-UniRule"/>
</dbReference>
<dbReference type="GO" id="GO:0042450">
    <property type="term" value="P:arginine biosynthetic process via ornithine"/>
    <property type="evidence" value="ECO:0007669"/>
    <property type="project" value="UniProtKB-UniRule"/>
</dbReference>
<dbReference type="GO" id="GO:0006526">
    <property type="term" value="P:L-arginine biosynthetic process"/>
    <property type="evidence" value="ECO:0007669"/>
    <property type="project" value="UniProtKB-UniPathway"/>
</dbReference>
<dbReference type="CDD" id="cd04238">
    <property type="entry name" value="AAK_NAGK-like"/>
    <property type="match status" value="1"/>
</dbReference>
<dbReference type="Gene3D" id="3.40.1160.10">
    <property type="entry name" value="Acetylglutamate kinase-like"/>
    <property type="match status" value="1"/>
</dbReference>
<dbReference type="HAMAP" id="MF_00082">
    <property type="entry name" value="ArgB"/>
    <property type="match status" value="1"/>
</dbReference>
<dbReference type="InterPro" id="IPR036393">
    <property type="entry name" value="AceGlu_kinase-like_sf"/>
</dbReference>
<dbReference type="InterPro" id="IPR004662">
    <property type="entry name" value="AcgluKinase_fam"/>
</dbReference>
<dbReference type="InterPro" id="IPR037528">
    <property type="entry name" value="ArgB"/>
</dbReference>
<dbReference type="InterPro" id="IPR001048">
    <property type="entry name" value="Asp/Glu/Uridylate_kinase"/>
</dbReference>
<dbReference type="NCBIfam" id="TIGR00761">
    <property type="entry name" value="argB"/>
    <property type="match status" value="1"/>
</dbReference>
<dbReference type="PANTHER" id="PTHR23342">
    <property type="entry name" value="N-ACETYLGLUTAMATE SYNTHASE"/>
    <property type="match status" value="1"/>
</dbReference>
<dbReference type="PANTHER" id="PTHR23342:SF0">
    <property type="entry name" value="N-ACETYLGLUTAMATE SYNTHASE, MITOCHONDRIAL"/>
    <property type="match status" value="1"/>
</dbReference>
<dbReference type="Pfam" id="PF00696">
    <property type="entry name" value="AA_kinase"/>
    <property type="match status" value="1"/>
</dbReference>
<dbReference type="PIRSF" id="PIRSF000728">
    <property type="entry name" value="NAGK"/>
    <property type="match status" value="1"/>
</dbReference>
<dbReference type="SUPFAM" id="SSF53633">
    <property type="entry name" value="Carbamate kinase-like"/>
    <property type="match status" value="1"/>
</dbReference>
<gene>
    <name evidence="1" type="primary">argB</name>
    <name type="ordered locus">LMHCC_0973</name>
</gene>
<proteinExistence type="inferred from homology"/>